<protein>
    <recommendedName>
        <fullName evidence="1">sn-glycerol-3-phosphate import ATP-binding protein UgpC</fullName>
        <ecNumber evidence="1">7.6.2.10</ecNumber>
    </recommendedName>
</protein>
<accession>Q8X6U5</accession>
<accession>Q7AA82</accession>
<sequence length="356" mass="39391">MAGLKLQAVTKSWDGKTQVIKPLTLDVADGEFIVMVGPSGCGKSTLLRMVAGLERVTEGDICINDQRVTEMEPKDRGIAMVFQNYALYPHMSVEENMAWGLKIRGMGKQQIAERVKEAARILELDGLLKRRPRELSGGQRQRVAMGRAIVRDPAVFLFDEPLSNLDAKLRVQMRLELQQLHRRLKTTSLYVTHDQVEAMTLAQRVMVMNGGVAEQIGTPVEVYEKPASLFVASFIGSPAMNLLTGRVNNEGTHFELDGGIALPLNGGYRQYAGRKMTLGIRPEHIALSSQAEGGVPLVMDTLEILGADNLAHGRWGEQKLVVRLAHQERPTAGSTLWLHLPENQLHLFDGETGQRV</sequence>
<comment type="function">
    <text evidence="1">Part of the ABC transporter complex UgpBAEC involved in sn-glycerol-3-phosphate (G3P) import. Responsible for energy coupling to the transport system.</text>
</comment>
<comment type="catalytic activity">
    <reaction evidence="1">
        <text>sn-glycerol 3-phosphate(out) + ATP + H2O = sn-glycerol 3-phosphate(in) + ADP + phosphate + H(+)</text>
        <dbReference type="Rhea" id="RHEA:21668"/>
        <dbReference type="ChEBI" id="CHEBI:15377"/>
        <dbReference type="ChEBI" id="CHEBI:15378"/>
        <dbReference type="ChEBI" id="CHEBI:30616"/>
        <dbReference type="ChEBI" id="CHEBI:43474"/>
        <dbReference type="ChEBI" id="CHEBI:57597"/>
        <dbReference type="ChEBI" id="CHEBI:456216"/>
        <dbReference type="EC" id="7.6.2.10"/>
    </reaction>
</comment>
<comment type="subunit">
    <text evidence="1">The complex is composed of two ATP-binding proteins (UgpC), two transmembrane proteins (UgpA and UgpE) and a solute-binding protein (UgpB).</text>
</comment>
<comment type="subcellular location">
    <subcellularLocation>
        <location evidence="1">Cell inner membrane</location>
        <topology evidence="1">Peripheral membrane protein</topology>
    </subcellularLocation>
</comment>
<comment type="similarity">
    <text evidence="1">Belongs to the ABC transporter superfamily. sn-glycerol-3-phosphate importer (TC 3.A.1.1.3) family.</text>
</comment>
<comment type="sequence caution" evidence="2">
    <conflict type="erroneous initiation">
        <sequence resource="EMBL-CDS" id="AAG58556"/>
    </conflict>
    <text>Extended N-terminus.</text>
</comment>
<proteinExistence type="inferred from homology"/>
<gene>
    <name evidence="1" type="primary">ugpC</name>
    <name type="ordered locus">Z4818</name>
    <name type="ordered locus">ECs4296</name>
</gene>
<reference key="1">
    <citation type="journal article" date="2001" name="Nature">
        <title>Genome sequence of enterohaemorrhagic Escherichia coli O157:H7.</title>
        <authorList>
            <person name="Perna N.T."/>
            <person name="Plunkett G. III"/>
            <person name="Burland V."/>
            <person name="Mau B."/>
            <person name="Glasner J.D."/>
            <person name="Rose D.J."/>
            <person name="Mayhew G.F."/>
            <person name="Evans P.S."/>
            <person name="Gregor J."/>
            <person name="Kirkpatrick H.A."/>
            <person name="Posfai G."/>
            <person name="Hackett J."/>
            <person name="Klink S."/>
            <person name="Boutin A."/>
            <person name="Shao Y."/>
            <person name="Miller L."/>
            <person name="Grotbeck E.J."/>
            <person name="Davis N.W."/>
            <person name="Lim A."/>
            <person name="Dimalanta E.T."/>
            <person name="Potamousis K."/>
            <person name="Apodaca J."/>
            <person name="Anantharaman T.S."/>
            <person name="Lin J."/>
            <person name="Yen G."/>
            <person name="Schwartz D.C."/>
            <person name="Welch R.A."/>
            <person name="Blattner F.R."/>
        </authorList>
    </citation>
    <scope>NUCLEOTIDE SEQUENCE [LARGE SCALE GENOMIC DNA]</scope>
    <source>
        <strain>O157:H7 / EDL933 / ATCC 700927 / EHEC</strain>
    </source>
</reference>
<reference key="2">
    <citation type="journal article" date="2001" name="DNA Res.">
        <title>Complete genome sequence of enterohemorrhagic Escherichia coli O157:H7 and genomic comparison with a laboratory strain K-12.</title>
        <authorList>
            <person name="Hayashi T."/>
            <person name="Makino K."/>
            <person name="Ohnishi M."/>
            <person name="Kurokawa K."/>
            <person name="Ishii K."/>
            <person name="Yokoyama K."/>
            <person name="Han C.-G."/>
            <person name="Ohtsubo E."/>
            <person name="Nakayama K."/>
            <person name="Murata T."/>
            <person name="Tanaka M."/>
            <person name="Tobe T."/>
            <person name="Iida T."/>
            <person name="Takami H."/>
            <person name="Honda T."/>
            <person name="Sasakawa C."/>
            <person name="Ogasawara N."/>
            <person name="Yasunaga T."/>
            <person name="Kuhara S."/>
            <person name="Shiba T."/>
            <person name="Hattori M."/>
            <person name="Shinagawa H."/>
        </authorList>
    </citation>
    <scope>NUCLEOTIDE SEQUENCE [LARGE SCALE GENOMIC DNA]</scope>
    <source>
        <strain>O157:H7 / Sakai / RIMD 0509952 / EHEC</strain>
    </source>
</reference>
<organism>
    <name type="scientific">Escherichia coli O157:H7</name>
    <dbReference type="NCBI Taxonomy" id="83334"/>
    <lineage>
        <taxon>Bacteria</taxon>
        <taxon>Pseudomonadati</taxon>
        <taxon>Pseudomonadota</taxon>
        <taxon>Gammaproteobacteria</taxon>
        <taxon>Enterobacterales</taxon>
        <taxon>Enterobacteriaceae</taxon>
        <taxon>Escherichia</taxon>
    </lineage>
</organism>
<keyword id="KW-0067">ATP-binding</keyword>
<keyword id="KW-0997">Cell inner membrane</keyword>
<keyword id="KW-1003">Cell membrane</keyword>
<keyword id="KW-0472">Membrane</keyword>
<keyword id="KW-0547">Nucleotide-binding</keyword>
<keyword id="KW-1185">Reference proteome</keyword>
<keyword id="KW-0762">Sugar transport</keyword>
<keyword id="KW-1278">Translocase</keyword>
<keyword id="KW-0813">Transport</keyword>
<evidence type="ECO:0000255" key="1">
    <source>
        <dbReference type="HAMAP-Rule" id="MF_01727"/>
    </source>
</evidence>
<evidence type="ECO:0000305" key="2"/>
<feature type="chain" id="PRO_0000289751" description="sn-glycerol-3-phosphate import ATP-binding protein UgpC">
    <location>
        <begin position="1"/>
        <end position="356"/>
    </location>
</feature>
<feature type="domain" description="ABC transporter" evidence="1">
    <location>
        <begin position="4"/>
        <end position="235"/>
    </location>
</feature>
<feature type="binding site" evidence="1">
    <location>
        <begin position="37"/>
        <end position="44"/>
    </location>
    <ligand>
        <name>ATP</name>
        <dbReference type="ChEBI" id="CHEBI:30616"/>
    </ligand>
</feature>
<name>UGPC_ECO57</name>
<dbReference type="EC" id="7.6.2.10" evidence="1"/>
<dbReference type="EMBL" id="AE005174">
    <property type="protein sequence ID" value="AAG58556.1"/>
    <property type="status" value="ALT_INIT"/>
    <property type="molecule type" value="Genomic_DNA"/>
</dbReference>
<dbReference type="EMBL" id="BA000007">
    <property type="protein sequence ID" value="BAB37719.2"/>
    <property type="molecule type" value="Genomic_DNA"/>
</dbReference>
<dbReference type="PIR" id="H86011">
    <property type="entry name" value="H86011"/>
</dbReference>
<dbReference type="PIR" id="H91165">
    <property type="entry name" value="H91165"/>
</dbReference>
<dbReference type="RefSeq" id="NP_312323.2">
    <property type="nucleotide sequence ID" value="NC_002695.1"/>
</dbReference>
<dbReference type="RefSeq" id="WP_000907770.1">
    <property type="nucleotide sequence ID" value="NZ_VOAI01000004.1"/>
</dbReference>
<dbReference type="SMR" id="Q8X6U5"/>
<dbReference type="STRING" id="155864.Z4818"/>
<dbReference type="GeneID" id="915835"/>
<dbReference type="KEGG" id="ece:Z4818"/>
<dbReference type="KEGG" id="ecs:ECs_4296"/>
<dbReference type="PATRIC" id="fig|386585.9.peg.4487"/>
<dbReference type="eggNOG" id="COG3842">
    <property type="taxonomic scope" value="Bacteria"/>
</dbReference>
<dbReference type="HOGENOM" id="CLU_000604_1_1_6"/>
<dbReference type="OMA" id="DSPRNMY"/>
<dbReference type="Proteomes" id="UP000000558">
    <property type="component" value="Chromosome"/>
</dbReference>
<dbReference type="Proteomes" id="UP000002519">
    <property type="component" value="Chromosome"/>
</dbReference>
<dbReference type="GO" id="GO:0055052">
    <property type="term" value="C:ATP-binding cassette (ABC) transporter complex, substrate-binding subunit-containing"/>
    <property type="evidence" value="ECO:0007669"/>
    <property type="project" value="TreeGrafter"/>
</dbReference>
<dbReference type="GO" id="GO:0015430">
    <property type="term" value="F:ABC-type glycerol-3-phosphate transporter activity"/>
    <property type="evidence" value="ECO:0007669"/>
    <property type="project" value="UniProtKB-EC"/>
</dbReference>
<dbReference type="GO" id="GO:0005524">
    <property type="term" value="F:ATP binding"/>
    <property type="evidence" value="ECO:0007669"/>
    <property type="project" value="UniProtKB-KW"/>
</dbReference>
<dbReference type="GO" id="GO:0016887">
    <property type="term" value="F:ATP hydrolysis activity"/>
    <property type="evidence" value="ECO:0007669"/>
    <property type="project" value="InterPro"/>
</dbReference>
<dbReference type="GO" id="GO:0008643">
    <property type="term" value="P:carbohydrate transport"/>
    <property type="evidence" value="ECO:0007669"/>
    <property type="project" value="InterPro"/>
</dbReference>
<dbReference type="GO" id="GO:0001407">
    <property type="term" value="P:glycerophosphodiester transmembrane transport"/>
    <property type="evidence" value="ECO:0007669"/>
    <property type="project" value="TreeGrafter"/>
</dbReference>
<dbReference type="CDD" id="cd03301">
    <property type="entry name" value="ABC_MalK_N"/>
    <property type="match status" value="1"/>
</dbReference>
<dbReference type="FunFam" id="3.40.50.300:FF:000042">
    <property type="entry name" value="Maltose/maltodextrin ABC transporter, ATP-binding protein"/>
    <property type="match status" value="1"/>
</dbReference>
<dbReference type="FunFam" id="2.40.50.100:FF:000032">
    <property type="entry name" value="sn-glycerol-3-phosphate import ATP-binding protein UgpC"/>
    <property type="match status" value="1"/>
</dbReference>
<dbReference type="FunFam" id="2.40.50.140:FF:000142">
    <property type="entry name" value="sn-glycerol-3-phosphate import ATP-binding protein UgpC"/>
    <property type="match status" value="1"/>
</dbReference>
<dbReference type="Gene3D" id="2.40.50.100">
    <property type="match status" value="1"/>
</dbReference>
<dbReference type="Gene3D" id="2.40.50.140">
    <property type="entry name" value="Nucleic acid-binding proteins"/>
    <property type="match status" value="1"/>
</dbReference>
<dbReference type="Gene3D" id="3.40.50.300">
    <property type="entry name" value="P-loop containing nucleotide triphosphate hydrolases"/>
    <property type="match status" value="1"/>
</dbReference>
<dbReference type="InterPro" id="IPR003593">
    <property type="entry name" value="AAA+_ATPase"/>
</dbReference>
<dbReference type="InterPro" id="IPR003439">
    <property type="entry name" value="ABC_transporter-like_ATP-bd"/>
</dbReference>
<dbReference type="InterPro" id="IPR017871">
    <property type="entry name" value="ABC_transporter-like_CS"/>
</dbReference>
<dbReference type="InterPro" id="IPR015855">
    <property type="entry name" value="ABC_transpr_MalK-like"/>
</dbReference>
<dbReference type="InterPro" id="IPR047641">
    <property type="entry name" value="ABC_transpr_MalK/UgpC-like"/>
</dbReference>
<dbReference type="InterPro" id="IPR008995">
    <property type="entry name" value="Mo/tungstate-bd_C_term_dom"/>
</dbReference>
<dbReference type="InterPro" id="IPR012340">
    <property type="entry name" value="NA-bd_OB-fold"/>
</dbReference>
<dbReference type="InterPro" id="IPR040582">
    <property type="entry name" value="OB_MalK-like"/>
</dbReference>
<dbReference type="InterPro" id="IPR027417">
    <property type="entry name" value="P-loop_NTPase"/>
</dbReference>
<dbReference type="NCBIfam" id="NF008653">
    <property type="entry name" value="PRK11650.1"/>
    <property type="match status" value="1"/>
</dbReference>
<dbReference type="PANTHER" id="PTHR43875">
    <property type="entry name" value="MALTODEXTRIN IMPORT ATP-BINDING PROTEIN MSMX"/>
    <property type="match status" value="1"/>
</dbReference>
<dbReference type="PANTHER" id="PTHR43875:SF12">
    <property type="entry name" value="SN-GLYCEROL-3-PHOSPHATE IMPORT ATP-BINDING PROTEIN UGPC"/>
    <property type="match status" value="1"/>
</dbReference>
<dbReference type="Pfam" id="PF00005">
    <property type="entry name" value="ABC_tran"/>
    <property type="match status" value="1"/>
</dbReference>
<dbReference type="Pfam" id="PF17912">
    <property type="entry name" value="OB_MalK"/>
    <property type="match status" value="1"/>
</dbReference>
<dbReference type="SMART" id="SM00382">
    <property type="entry name" value="AAA"/>
    <property type="match status" value="1"/>
</dbReference>
<dbReference type="SUPFAM" id="SSF50331">
    <property type="entry name" value="MOP-like"/>
    <property type="match status" value="1"/>
</dbReference>
<dbReference type="SUPFAM" id="SSF52540">
    <property type="entry name" value="P-loop containing nucleoside triphosphate hydrolases"/>
    <property type="match status" value="1"/>
</dbReference>
<dbReference type="PROSITE" id="PS00211">
    <property type="entry name" value="ABC_TRANSPORTER_1"/>
    <property type="match status" value="1"/>
</dbReference>
<dbReference type="PROSITE" id="PS50893">
    <property type="entry name" value="ABC_TRANSPORTER_2"/>
    <property type="match status" value="1"/>
</dbReference>
<dbReference type="PROSITE" id="PS51315">
    <property type="entry name" value="UGPC"/>
    <property type="match status" value="1"/>
</dbReference>